<dbReference type="EC" id="2.7.-.-"/>
<dbReference type="EMBL" id="M81739">
    <property type="protein sequence ID" value="AAA26767.1"/>
    <property type="molecule type" value="Genomic_DNA"/>
</dbReference>
<dbReference type="PIR" id="JC1125">
    <property type="entry name" value="JC1125"/>
</dbReference>
<dbReference type="SMR" id="Q00923"/>
<dbReference type="GO" id="GO:0005524">
    <property type="term" value="F:ATP binding"/>
    <property type="evidence" value="ECO:0007669"/>
    <property type="project" value="UniProtKB-KW"/>
</dbReference>
<dbReference type="GO" id="GO:0016301">
    <property type="term" value="F:kinase activity"/>
    <property type="evidence" value="ECO:0007669"/>
    <property type="project" value="UniProtKB-KW"/>
</dbReference>
<dbReference type="GO" id="GO:0016773">
    <property type="term" value="F:phosphotransferase activity, alcohol group as acceptor"/>
    <property type="evidence" value="ECO:0007669"/>
    <property type="project" value="InterPro"/>
</dbReference>
<dbReference type="GO" id="GO:0019748">
    <property type="term" value="P:secondary metabolic process"/>
    <property type="evidence" value="ECO:0007669"/>
    <property type="project" value="InterPro"/>
</dbReference>
<dbReference type="Gene3D" id="1.10.510.10">
    <property type="entry name" value="Transferase(Phosphotransferase) domain 1"/>
    <property type="match status" value="1"/>
</dbReference>
<dbReference type="InterPro" id="IPR011009">
    <property type="entry name" value="Kinase-like_dom_sf"/>
</dbReference>
<dbReference type="InterPro" id="IPR006748">
    <property type="entry name" value="NH2Glyco/OHUrea_AB-resist_kin"/>
</dbReference>
<dbReference type="Pfam" id="PF04655">
    <property type="entry name" value="APH_6_hur"/>
    <property type="match status" value="1"/>
</dbReference>
<dbReference type="SUPFAM" id="SSF56112">
    <property type="entry name" value="Protein kinase-like (PK-like)"/>
    <property type="match status" value="1"/>
</dbReference>
<sequence length="340" mass="36049">MRGTPAVLVDGKPVGAKDGSMFDAAGFARTLKGRAWLRRVGAVVEIPAELVEVQLRYGGAAGREFVEGLPGRVAEFLERWGLRVAGPAMHGMTALVLPVVRADGTEAALKLLVPDEESAGEPVALRAWDGRGCVRLLEWDGPTGTLLLERLDAGRHLSGLVERDARAAVTVVAGLLARLTSVRAPEGLRGLGEVAAGLLAGVPEAAGRLADAGERRLLRDCAAALAEVAAEPGDRLLHWDLHFGNVLAGEREPWLAIDPKPLAGDPGFELLPALVNGFRAGEVGWRFDLLTGVVGLDRERARAWTLGRVVQNCLWEVEDGEVALPEREVAVAEVLLGRAG</sequence>
<gene>
    <name type="primary">hur</name>
</gene>
<feature type="chain" id="PRO_0000204819" description="Hydroxyurea phosphotransferase">
    <location>
        <begin position="1"/>
        <end position="340"/>
    </location>
</feature>
<feature type="active site" description="Proton acceptor" evidence="1">
    <location>
        <position position="240"/>
    </location>
</feature>
<organism>
    <name type="scientific">Kitasatospora aureofaciens</name>
    <name type="common">Streptomyces aureofaciens</name>
    <dbReference type="NCBI Taxonomy" id="1894"/>
    <lineage>
        <taxon>Bacteria</taxon>
        <taxon>Bacillati</taxon>
        <taxon>Actinomycetota</taxon>
        <taxon>Actinomycetes</taxon>
        <taxon>Kitasatosporales</taxon>
        <taxon>Streptomycetaceae</taxon>
        <taxon>Kitasatospora</taxon>
    </lineage>
</organism>
<proteinExistence type="inferred from homology"/>
<evidence type="ECO:0000250" key="1"/>
<evidence type="ECO:0000305" key="2"/>
<reference key="1">
    <citation type="journal article" date="1992" name="Gene">
        <title>A gene (hur) from Streptomyces aureofaciens, conferring resistance to hydroxyurea, is related to genes encoding streptomycin phosphotransferase.</title>
        <authorList>
            <person name="Kormanec J."/>
            <person name="Farkasovsky M."/>
            <person name="Potuchkova L."/>
            <person name="Godar S."/>
        </authorList>
    </citation>
    <scope>NUCLEOTIDE SEQUENCE [GENOMIC DNA]</scope>
    <source>
        <strain>ATCC 10762 / DSM 40127 / CCM 3239 / JCM 4008 / LMG 5968 / NBRC 12843 / NCIMB 8234 / A-377</strain>
    </source>
</reference>
<accession>Q00923</accession>
<protein>
    <recommendedName>
        <fullName>Hydroxyurea phosphotransferase</fullName>
        <ecNumber>2.7.-.-</ecNumber>
    </recommendedName>
    <alternativeName>
        <fullName>Hydroxyurea resistance protein</fullName>
    </alternativeName>
</protein>
<keyword id="KW-0067">ATP-binding</keyword>
<keyword id="KW-0418">Kinase</keyword>
<keyword id="KW-0547">Nucleotide-binding</keyword>
<keyword id="KW-0808">Transferase</keyword>
<name>HUR_KITAU</name>
<comment type="function">
    <text>Potential phosphotransferase that inactivates hydroxyurea by phosphorylation of the hydroxy group in the hydroxylamine moiety.</text>
</comment>
<comment type="similarity">
    <text evidence="2">Belongs to the aminoglycoside phosphotransferase family.</text>
</comment>